<feature type="chain" id="PRO_1000203370" description="dCTP deaminase">
    <location>
        <begin position="1"/>
        <end position="193"/>
    </location>
</feature>
<feature type="active site" description="Proton donor/acceptor" evidence="1">
    <location>
        <position position="138"/>
    </location>
</feature>
<feature type="binding site" evidence="1">
    <location>
        <begin position="110"/>
        <end position="115"/>
    </location>
    <ligand>
        <name>dCTP</name>
        <dbReference type="ChEBI" id="CHEBI:61481"/>
    </ligand>
</feature>
<feature type="binding site" evidence="1">
    <location>
        <position position="128"/>
    </location>
    <ligand>
        <name>dCTP</name>
        <dbReference type="ChEBI" id="CHEBI:61481"/>
    </ligand>
</feature>
<feature type="binding site" evidence="1">
    <location>
        <begin position="136"/>
        <end position="138"/>
    </location>
    <ligand>
        <name>dCTP</name>
        <dbReference type="ChEBI" id="CHEBI:61481"/>
    </ligand>
</feature>
<feature type="binding site" evidence="1">
    <location>
        <position position="171"/>
    </location>
    <ligand>
        <name>dCTP</name>
        <dbReference type="ChEBI" id="CHEBI:61481"/>
    </ligand>
</feature>
<feature type="binding site" evidence="1">
    <location>
        <position position="178"/>
    </location>
    <ligand>
        <name>dCTP</name>
        <dbReference type="ChEBI" id="CHEBI:61481"/>
    </ligand>
</feature>
<feature type="binding site" evidence="1">
    <location>
        <position position="182"/>
    </location>
    <ligand>
        <name>dCTP</name>
        <dbReference type="ChEBI" id="CHEBI:61481"/>
    </ligand>
</feature>
<name>DCD_TOLAT</name>
<protein>
    <recommendedName>
        <fullName evidence="1">dCTP deaminase</fullName>
        <ecNumber evidence="1">3.5.4.13</ecNumber>
    </recommendedName>
    <alternativeName>
        <fullName evidence="1">Deoxycytidine triphosphate deaminase</fullName>
    </alternativeName>
</protein>
<gene>
    <name evidence="1" type="primary">dcd</name>
    <name type="ordered locus">Tola_1528</name>
</gene>
<keyword id="KW-0378">Hydrolase</keyword>
<keyword id="KW-0546">Nucleotide metabolism</keyword>
<keyword id="KW-0547">Nucleotide-binding</keyword>
<keyword id="KW-1185">Reference proteome</keyword>
<dbReference type="EC" id="3.5.4.13" evidence="1"/>
<dbReference type="EMBL" id="CP001616">
    <property type="protein sequence ID" value="ACQ93139.1"/>
    <property type="molecule type" value="Genomic_DNA"/>
</dbReference>
<dbReference type="RefSeq" id="WP_015878611.1">
    <property type="nucleotide sequence ID" value="NC_012691.1"/>
</dbReference>
<dbReference type="SMR" id="C4LEX2"/>
<dbReference type="STRING" id="595494.Tola_1528"/>
<dbReference type="KEGG" id="tau:Tola_1528"/>
<dbReference type="eggNOG" id="COG0717">
    <property type="taxonomic scope" value="Bacteria"/>
</dbReference>
<dbReference type="HOGENOM" id="CLU_087476_2_0_6"/>
<dbReference type="OrthoDB" id="9780956at2"/>
<dbReference type="UniPathway" id="UPA00610">
    <property type="reaction ID" value="UER00665"/>
</dbReference>
<dbReference type="Proteomes" id="UP000009073">
    <property type="component" value="Chromosome"/>
</dbReference>
<dbReference type="GO" id="GO:0008829">
    <property type="term" value="F:dCTP deaminase activity"/>
    <property type="evidence" value="ECO:0007669"/>
    <property type="project" value="UniProtKB-UniRule"/>
</dbReference>
<dbReference type="GO" id="GO:0000166">
    <property type="term" value="F:nucleotide binding"/>
    <property type="evidence" value="ECO:0007669"/>
    <property type="project" value="UniProtKB-KW"/>
</dbReference>
<dbReference type="GO" id="GO:0006226">
    <property type="term" value="P:dUMP biosynthetic process"/>
    <property type="evidence" value="ECO:0007669"/>
    <property type="project" value="UniProtKB-UniPathway"/>
</dbReference>
<dbReference type="GO" id="GO:0006229">
    <property type="term" value="P:dUTP biosynthetic process"/>
    <property type="evidence" value="ECO:0007669"/>
    <property type="project" value="UniProtKB-UniRule"/>
</dbReference>
<dbReference type="GO" id="GO:0015949">
    <property type="term" value="P:nucleobase-containing small molecule interconversion"/>
    <property type="evidence" value="ECO:0007669"/>
    <property type="project" value="TreeGrafter"/>
</dbReference>
<dbReference type="CDD" id="cd07557">
    <property type="entry name" value="trimeric_dUTPase"/>
    <property type="match status" value="1"/>
</dbReference>
<dbReference type="FunFam" id="2.70.40.10:FF:000003">
    <property type="entry name" value="dCTP deaminase"/>
    <property type="match status" value="1"/>
</dbReference>
<dbReference type="Gene3D" id="2.70.40.10">
    <property type="match status" value="1"/>
</dbReference>
<dbReference type="HAMAP" id="MF_00146">
    <property type="entry name" value="dCTP_deaminase"/>
    <property type="match status" value="1"/>
</dbReference>
<dbReference type="InterPro" id="IPR011962">
    <property type="entry name" value="dCTP_deaminase"/>
</dbReference>
<dbReference type="InterPro" id="IPR036157">
    <property type="entry name" value="dUTPase-like_sf"/>
</dbReference>
<dbReference type="InterPro" id="IPR033704">
    <property type="entry name" value="dUTPase_trimeric"/>
</dbReference>
<dbReference type="NCBIfam" id="TIGR02274">
    <property type="entry name" value="dCTP_deam"/>
    <property type="match status" value="1"/>
</dbReference>
<dbReference type="PANTHER" id="PTHR42680">
    <property type="entry name" value="DCTP DEAMINASE"/>
    <property type="match status" value="1"/>
</dbReference>
<dbReference type="PANTHER" id="PTHR42680:SF3">
    <property type="entry name" value="DCTP DEAMINASE"/>
    <property type="match status" value="1"/>
</dbReference>
<dbReference type="Pfam" id="PF22769">
    <property type="entry name" value="DCD"/>
    <property type="match status" value="1"/>
</dbReference>
<dbReference type="SUPFAM" id="SSF51283">
    <property type="entry name" value="dUTPase-like"/>
    <property type="match status" value="1"/>
</dbReference>
<comment type="function">
    <text evidence="1">Catalyzes the deamination of dCTP to dUTP.</text>
</comment>
<comment type="catalytic activity">
    <reaction evidence="1">
        <text>dCTP + H2O + H(+) = dUTP + NH4(+)</text>
        <dbReference type="Rhea" id="RHEA:22680"/>
        <dbReference type="ChEBI" id="CHEBI:15377"/>
        <dbReference type="ChEBI" id="CHEBI:15378"/>
        <dbReference type="ChEBI" id="CHEBI:28938"/>
        <dbReference type="ChEBI" id="CHEBI:61481"/>
        <dbReference type="ChEBI" id="CHEBI:61555"/>
        <dbReference type="EC" id="3.5.4.13"/>
    </reaction>
</comment>
<comment type="pathway">
    <text evidence="1">Pyrimidine metabolism; dUMP biosynthesis; dUMP from dCTP (dUTP route): step 1/2.</text>
</comment>
<comment type="subunit">
    <text evidence="1">Homotrimer.</text>
</comment>
<comment type="similarity">
    <text evidence="1">Belongs to the dCTP deaminase family.</text>
</comment>
<proteinExistence type="inferred from homology"/>
<reference key="1">
    <citation type="submission" date="2009-05" db="EMBL/GenBank/DDBJ databases">
        <title>Complete sequence of Tolumonas auensis DSM 9187.</title>
        <authorList>
            <consortium name="US DOE Joint Genome Institute"/>
            <person name="Lucas S."/>
            <person name="Copeland A."/>
            <person name="Lapidus A."/>
            <person name="Glavina del Rio T."/>
            <person name="Tice H."/>
            <person name="Bruce D."/>
            <person name="Goodwin L."/>
            <person name="Pitluck S."/>
            <person name="Chertkov O."/>
            <person name="Brettin T."/>
            <person name="Detter J.C."/>
            <person name="Han C."/>
            <person name="Larimer F."/>
            <person name="Land M."/>
            <person name="Hauser L."/>
            <person name="Kyrpides N."/>
            <person name="Mikhailova N."/>
            <person name="Spring S."/>
            <person name="Beller H."/>
        </authorList>
    </citation>
    <scope>NUCLEOTIDE SEQUENCE [LARGE SCALE GENOMIC DNA]</scope>
    <source>
        <strain>DSM 9187 / NBRC 110442 / TA 4</strain>
    </source>
</reference>
<sequence length="193" mass="21293">MRLCDRDIEQHLEEGKIVIEPRPDSSRISGVSVDVLLGNEFRVFQAHTAPYIDLSGPKEEVSAAIDRVMSDEIYIKDSEVFILHPGELALAVTHESVTLPDNIVGWLDGRSSLARLGLMVHVTAHRIDPGWSGRIVLEFYNGGRLPLALRPGMVIGALNFETMSGSAARPYNKRTNAKYKSQQGAVASRIDQD</sequence>
<evidence type="ECO:0000255" key="1">
    <source>
        <dbReference type="HAMAP-Rule" id="MF_00146"/>
    </source>
</evidence>
<organism>
    <name type="scientific">Tolumonas auensis (strain DSM 9187 / NBRC 110442 / TA 4)</name>
    <dbReference type="NCBI Taxonomy" id="595494"/>
    <lineage>
        <taxon>Bacteria</taxon>
        <taxon>Pseudomonadati</taxon>
        <taxon>Pseudomonadota</taxon>
        <taxon>Gammaproteobacteria</taxon>
        <taxon>Aeromonadales</taxon>
        <taxon>Aeromonadaceae</taxon>
        <taxon>Tolumonas</taxon>
    </lineage>
</organism>
<accession>C4LEX2</accession>